<gene>
    <name evidence="1" type="primary">folD</name>
    <name type="ordered locus">CTC_01579</name>
</gene>
<reference key="1">
    <citation type="journal article" date="2003" name="Proc. Natl. Acad. Sci. U.S.A.">
        <title>The genome sequence of Clostridium tetani, the causative agent of tetanus disease.</title>
        <authorList>
            <person name="Brueggemann H."/>
            <person name="Baeumer S."/>
            <person name="Fricke W.F."/>
            <person name="Wiezer A."/>
            <person name="Liesegang H."/>
            <person name="Decker I."/>
            <person name="Herzberg C."/>
            <person name="Martinez-Arias R."/>
            <person name="Merkl R."/>
            <person name="Henne A."/>
            <person name="Gottschalk G."/>
        </authorList>
    </citation>
    <scope>NUCLEOTIDE SEQUENCE [LARGE SCALE GENOMIC DNA]</scope>
    <source>
        <strain>Massachusetts / E88</strain>
    </source>
</reference>
<feature type="chain" id="PRO_0000268320" description="Bifunctional protein FolD">
    <location>
        <begin position="1"/>
        <end position="278"/>
    </location>
</feature>
<feature type="binding site" evidence="1">
    <location>
        <begin position="165"/>
        <end position="167"/>
    </location>
    <ligand>
        <name>NADP(+)</name>
        <dbReference type="ChEBI" id="CHEBI:58349"/>
    </ligand>
</feature>
<feature type="binding site" evidence="1">
    <location>
        <position position="190"/>
    </location>
    <ligand>
        <name>NADP(+)</name>
        <dbReference type="ChEBI" id="CHEBI:58349"/>
    </ligand>
</feature>
<protein>
    <recommendedName>
        <fullName evidence="1">Bifunctional protein FolD</fullName>
    </recommendedName>
    <domain>
        <recommendedName>
            <fullName evidence="1">Methylenetetrahydrofolate dehydrogenase</fullName>
            <ecNumber evidence="1">1.5.1.5</ecNumber>
        </recommendedName>
    </domain>
    <domain>
        <recommendedName>
            <fullName evidence="1">Methenyltetrahydrofolate cyclohydrolase</fullName>
            <ecNumber evidence="1">3.5.4.9</ecNumber>
        </recommendedName>
    </domain>
</protein>
<sequence length="278" mass="30625">MAVAIDGKRVSEELRKELKNFIDERVEKGLKVPCVSSILIGNDKGSLFYIKNQRRICKEIGIEFKNIVLEENIEEDKIIEVIEDLNKDENVHGIILQMPLPKTLDEEKIVNKICPSKDIDGLTDINAGRFYKGEKCFIPCTAQGIIEIIKSTKESISGKKAVVLGRSVIVGKPVAQLLVNEDATVTICHSKTKDIKSLCKEADIIVSAMGIPKFVKEDFIKDGAIVIDVGFSVLDGKMVGDIDYDNVFKKAGFITPVPGGVGSVTPTMLIKNLCEVFK</sequence>
<name>FOLD_CLOTE</name>
<dbReference type="EC" id="1.5.1.5" evidence="1"/>
<dbReference type="EC" id="3.5.4.9" evidence="1"/>
<dbReference type="EMBL" id="AE015927">
    <property type="protein sequence ID" value="AAO36126.1"/>
    <property type="status" value="ALT_INIT"/>
    <property type="molecule type" value="Genomic_DNA"/>
</dbReference>
<dbReference type="RefSeq" id="WP_035109615.1">
    <property type="nucleotide sequence ID" value="NC_004557.1"/>
</dbReference>
<dbReference type="SMR" id="Q894G6"/>
<dbReference type="STRING" id="212717.CTC_01579"/>
<dbReference type="GeneID" id="24253822"/>
<dbReference type="KEGG" id="ctc:CTC_01579"/>
<dbReference type="HOGENOM" id="CLU_034045_2_1_9"/>
<dbReference type="OrthoDB" id="9803580at2"/>
<dbReference type="UniPathway" id="UPA00193"/>
<dbReference type="Proteomes" id="UP000001412">
    <property type="component" value="Chromosome"/>
</dbReference>
<dbReference type="GO" id="GO:0005829">
    <property type="term" value="C:cytosol"/>
    <property type="evidence" value="ECO:0007669"/>
    <property type="project" value="TreeGrafter"/>
</dbReference>
<dbReference type="GO" id="GO:0004477">
    <property type="term" value="F:methenyltetrahydrofolate cyclohydrolase activity"/>
    <property type="evidence" value="ECO:0007669"/>
    <property type="project" value="UniProtKB-UniRule"/>
</dbReference>
<dbReference type="GO" id="GO:0004488">
    <property type="term" value="F:methylenetetrahydrofolate dehydrogenase (NADP+) activity"/>
    <property type="evidence" value="ECO:0007669"/>
    <property type="project" value="UniProtKB-UniRule"/>
</dbReference>
<dbReference type="GO" id="GO:0000105">
    <property type="term" value="P:L-histidine biosynthetic process"/>
    <property type="evidence" value="ECO:0007669"/>
    <property type="project" value="UniProtKB-KW"/>
</dbReference>
<dbReference type="GO" id="GO:0009086">
    <property type="term" value="P:methionine biosynthetic process"/>
    <property type="evidence" value="ECO:0007669"/>
    <property type="project" value="UniProtKB-KW"/>
</dbReference>
<dbReference type="GO" id="GO:0006164">
    <property type="term" value="P:purine nucleotide biosynthetic process"/>
    <property type="evidence" value="ECO:0007669"/>
    <property type="project" value="UniProtKB-KW"/>
</dbReference>
<dbReference type="GO" id="GO:0035999">
    <property type="term" value="P:tetrahydrofolate interconversion"/>
    <property type="evidence" value="ECO:0007669"/>
    <property type="project" value="UniProtKB-UniRule"/>
</dbReference>
<dbReference type="CDD" id="cd01080">
    <property type="entry name" value="NAD_bind_m-THF_DH_Cyclohyd"/>
    <property type="match status" value="1"/>
</dbReference>
<dbReference type="FunFam" id="3.40.50.720:FF:000094">
    <property type="entry name" value="Bifunctional protein FolD"/>
    <property type="match status" value="1"/>
</dbReference>
<dbReference type="FunFam" id="3.40.50.10860:FF:000005">
    <property type="entry name" value="C-1-tetrahydrofolate synthase, cytoplasmic, putative"/>
    <property type="match status" value="1"/>
</dbReference>
<dbReference type="Gene3D" id="3.40.50.10860">
    <property type="entry name" value="Leucine Dehydrogenase, chain A, domain 1"/>
    <property type="match status" value="1"/>
</dbReference>
<dbReference type="Gene3D" id="3.40.50.720">
    <property type="entry name" value="NAD(P)-binding Rossmann-like Domain"/>
    <property type="match status" value="1"/>
</dbReference>
<dbReference type="HAMAP" id="MF_01576">
    <property type="entry name" value="THF_DHG_CYH"/>
    <property type="match status" value="1"/>
</dbReference>
<dbReference type="InterPro" id="IPR046346">
    <property type="entry name" value="Aminoacid_DH-like_N_sf"/>
</dbReference>
<dbReference type="InterPro" id="IPR036291">
    <property type="entry name" value="NAD(P)-bd_dom_sf"/>
</dbReference>
<dbReference type="InterPro" id="IPR000672">
    <property type="entry name" value="THF_DH/CycHdrlase"/>
</dbReference>
<dbReference type="InterPro" id="IPR020630">
    <property type="entry name" value="THF_DH/CycHdrlase_cat_dom"/>
</dbReference>
<dbReference type="InterPro" id="IPR020867">
    <property type="entry name" value="THF_DH/CycHdrlase_CS"/>
</dbReference>
<dbReference type="InterPro" id="IPR020631">
    <property type="entry name" value="THF_DH/CycHdrlase_NAD-bd_dom"/>
</dbReference>
<dbReference type="NCBIfam" id="NF010769">
    <property type="entry name" value="PRK14172.1"/>
    <property type="match status" value="1"/>
</dbReference>
<dbReference type="PANTHER" id="PTHR48099:SF5">
    <property type="entry name" value="C-1-TETRAHYDROFOLATE SYNTHASE, CYTOPLASMIC"/>
    <property type="match status" value="1"/>
</dbReference>
<dbReference type="PANTHER" id="PTHR48099">
    <property type="entry name" value="C-1-TETRAHYDROFOLATE SYNTHASE, CYTOPLASMIC-RELATED"/>
    <property type="match status" value="1"/>
</dbReference>
<dbReference type="Pfam" id="PF00763">
    <property type="entry name" value="THF_DHG_CYH"/>
    <property type="match status" value="1"/>
</dbReference>
<dbReference type="Pfam" id="PF02882">
    <property type="entry name" value="THF_DHG_CYH_C"/>
    <property type="match status" value="1"/>
</dbReference>
<dbReference type="PRINTS" id="PR00085">
    <property type="entry name" value="THFDHDRGNASE"/>
</dbReference>
<dbReference type="SUPFAM" id="SSF53223">
    <property type="entry name" value="Aminoacid dehydrogenase-like, N-terminal domain"/>
    <property type="match status" value="1"/>
</dbReference>
<dbReference type="SUPFAM" id="SSF51735">
    <property type="entry name" value="NAD(P)-binding Rossmann-fold domains"/>
    <property type="match status" value="1"/>
</dbReference>
<dbReference type="PROSITE" id="PS00766">
    <property type="entry name" value="THF_DHG_CYH_1"/>
    <property type="match status" value="1"/>
</dbReference>
<evidence type="ECO:0000255" key="1">
    <source>
        <dbReference type="HAMAP-Rule" id="MF_01576"/>
    </source>
</evidence>
<evidence type="ECO:0000305" key="2"/>
<comment type="function">
    <text evidence="1">Catalyzes the oxidation of 5,10-methylenetetrahydrofolate to 5,10-methenyltetrahydrofolate and then the hydrolysis of 5,10-methenyltetrahydrofolate to 10-formyltetrahydrofolate.</text>
</comment>
<comment type="catalytic activity">
    <reaction evidence="1">
        <text>(6R)-5,10-methylene-5,6,7,8-tetrahydrofolate + NADP(+) = (6R)-5,10-methenyltetrahydrofolate + NADPH</text>
        <dbReference type="Rhea" id="RHEA:22812"/>
        <dbReference type="ChEBI" id="CHEBI:15636"/>
        <dbReference type="ChEBI" id="CHEBI:57455"/>
        <dbReference type="ChEBI" id="CHEBI:57783"/>
        <dbReference type="ChEBI" id="CHEBI:58349"/>
        <dbReference type="EC" id="1.5.1.5"/>
    </reaction>
</comment>
<comment type="catalytic activity">
    <reaction evidence="1">
        <text>(6R)-5,10-methenyltetrahydrofolate + H2O = (6R)-10-formyltetrahydrofolate + H(+)</text>
        <dbReference type="Rhea" id="RHEA:23700"/>
        <dbReference type="ChEBI" id="CHEBI:15377"/>
        <dbReference type="ChEBI" id="CHEBI:15378"/>
        <dbReference type="ChEBI" id="CHEBI:57455"/>
        <dbReference type="ChEBI" id="CHEBI:195366"/>
        <dbReference type="EC" id="3.5.4.9"/>
    </reaction>
</comment>
<comment type="pathway">
    <text evidence="1">One-carbon metabolism; tetrahydrofolate interconversion.</text>
</comment>
<comment type="subunit">
    <text evidence="1">Homodimer.</text>
</comment>
<comment type="similarity">
    <text evidence="1">Belongs to the tetrahydrofolate dehydrogenase/cyclohydrolase family.</text>
</comment>
<comment type="sequence caution" evidence="2">
    <conflict type="erroneous initiation">
        <sequence resource="EMBL-CDS" id="AAO36126"/>
    </conflict>
</comment>
<organism>
    <name type="scientific">Clostridium tetani (strain Massachusetts / E88)</name>
    <dbReference type="NCBI Taxonomy" id="212717"/>
    <lineage>
        <taxon>Bacteria</taxon>
        <taxon>Bacillati</taxon>
        <taxon>Bacillota</taxon>
        <taxon>Clostridia</taxon>
        <taxon>Eubacteriales</taxon>
        <taxon>Clostridiaceae</taxon>
        <taxon>Clostridium</taxon>
    </lineage>
</organism>
<keyword id="KW-0028">Amino-acid biosynthesis</keyword>
<keyword id="KW-0368">Histidine biosynthesis</keyword>
<keyword id="KW-0378">Hydrolase</keyword>
<keyword id="KW-0486">Methionine biosynthesis</keyword>
<keyword id="KW-0511">Multifunctional enzyme</keyword>
<keyword id="KW-0521">NADP</keyword>
<keyword id="KW-0554">One-carbon metabolism</keyword>
<keyword id="KW-0560">Oxidoreductase</keyword>
<keyword id="KW-0658">Purine biosynthesis</keyword>
<keyword id="KW-1185">Reference proteome</keyword>
<accession>Q894G6</accession>
<proteinExistence type="inferred from homology"/>